<accession>Q63Q12</accession>
<organism>
    <name type="scientific">Burkholderia pseudomallei (strain K96243)</name>
    <dbReference type="NCBI Taxonomy" id="272560"/>
    <lineage>
        <taxon>Bacteria</taxon>
        <taxon>Pseudomonadati</taxon>
        <taxon>Pseudomonadota</taxon>
        <taxon>Betaproteobacteria</taxon>
        <taxon>Burkholderiales</taxon>
        <taxon>Burkholderiaceae</taxon>
        <taxon>Burkholderia</taxon>
        <taxon>pseudomallei group</taxon>
    </lineage>
</organism>
<proteinExistence type="inferred from homology"/>
<comment type="function">
    <text evidence="1">One of the primary rRNA binding proteins, this protein initially binds near the 5'-end of the 23S rRNA. It is important during the early stages of 50S assembly. It makes multiple contacts with different domains of the 23S rRNA in the assembled 50S subunit and ribosome.</text>
</comment>
<comment type="function">
    <text evidence="1">Forms part of the polypeptide exit tunnel.</text>
</comment>
<comment type="subunit">
    <text evidence="1">Part of the 50S ribosomal subunit.</text>
</comment>
<comment type="similarity">
    <text evidence="1">Belongs to the universal ribosomal protein uL4 family.</text>
</comment>
<keyword id="KW-1185">Reference proteome</keyword>
<keyword id="KW-0687">Ribonucleoprotein</keyword>
<keyword id="KW-0689">Ribosomal protein</keyword>
<keyword id="KW-0694">RNA-binding</keyword>
<keyword id="KW-0699">rRNA-binding</keyword>
<reference key="1">
    <citation type="journal article" date="2004" name="Proc. Natl. Acad. Sci. U.S.A.">
        <title>Genomic plasticity of the causative agent of melioidosis, Burkholderia pseudomallei.</title>
        <authorList>
            <person name="Holden M.T.G."/>
            <person name="Titball R.W."/>
            <person name="Peacock S.J."/>
            <person name="Cerdeno-Tarraga A.-M."/>
            <person name="Atkins T."/>
            <person name="Crossman L.C."/>
            <person name="Pitt T."/>
            <person name="Churcher C."/>
            <person name="Mungall K.L."/>
            <person name="Bentley S.D."/>
            <person name="Sebaihia M."/>
            <person name="Thomson N.R."/>
            <person name="Bason N."/>
            <person name="Beacham I.R."/>
            <person name="Brooks K."/>
            <person name="Brown K.A."/>
            <person name="Brown N.F."/>
            <person name="Challis G.L."/>
            <person name="Cherevach I."/>
            <person name="Chillingworth T."/>
            <person name="Cronin A."/>
            <person name="Crossett B."/>
            <person name="Davis P."/>
            <person name="DeShazer D."/>
            <person name="Feltwell T."/>
            <person name="Fraser A."/>
            <person name="Hance Z."/>
            <person name="Hauser H."/>
            <person name="Holroyd S."/>
            <person name="Jagels K."/>
            <person name="Keith K.E."/>
            <person name="Maddison M."/>
            <person name="Moule S."/>
            <person name="Price C."/>
            <person name="Quail M.A."/>
            <person name="Rabbinowitsch E."/>
            <person name="Rutherford K."/>
            <person name="Sanders M."/>
            <person name="Simmonds M."/>
            <person name="Songsivilai S."/>
            <person name="Stevens K."/>
            <person name="Tumapa S."/>
            <person name="Vesaratchavest M."/>
            <person name="Whitehead S."/>
            <person name="Yeats C."/>
            <person name="Barrell B.G."/>
            <person name="Oyston P.C.F."/>
            <person name="Parkhill J."/>
        </authorList>
    </citation>
    <scope>NUCLEOTIDE SEQUENCE [LARGE SCALE GENOMIC DNA]</scope>
    <source>
        <strain>K96243</strain>
    </source>
</reference>
<sequence>MELKLLNSNGQEGAVVNASDVVFGRDYNEALIHQVVVAYQANARQGNRAQKDREQVKHTTKKPWRQKGTGRARAGMSSSPLWRGGGRIFPNSPDENFSHKVNKKMHRAGLCSIFSQLAREGRLSVVEDIVLEAPKTKLLADKFKAMGLDSVLVITDTVDENLYLASRNLPHVAVVEPRYADPLSLIYFKKVLVTKAAVAQIEELLS</sequence>
<dbReference type="EMBL" id="BX571965">
    <property type="protein sequence ID" value="CAH37223.1"/>
    <property type="molecule type" value="Genomic_DNA"/>
</dbReference>
<dbReference type="RefSeq" id="WP_004199276.1">
    <property type="nucleotide sequence ID" value="NZ_CP009538.1"/>
</dbReference>
<dbReference type="RefSeq" id="YP_109806.1">
    <property type="nucleotide sequence ID" value="NC_006350.1"/>
</dbReference>
<dbReference type="SMR" id="Q63Q12"/>
<dbReference type="STRING" id="272560.BPSL3212"/>
<dbReference type="GeneID" id="93061831"/>
<dbReference type="KEGG" id="bps:BPSL3212"/>
<dbReference type="PATRIC" id="fig|272560.51.peg.2026"/>
<dbReference type="eggNOG" id="COG0088">
    <property type="taxonomic scope" value="Bacteria"/>
</dbReference>
<dbReference type="Proteomes" id="UP000000605">
    <property type="component" value="Chromosome 1"/>
</dbReference>
<dbReference type="GO" id="GO:1990904">
    <property type="term" value="C:ribonucleoprotein complex"/>
    <property type="evidence" value="ECO:0007669"/>
    <property type="project" value="UniProtKB-KW"/>
</dbReference>
<dbReference type="GO" id="GO:0005840">
    <property type="term" value="C:ribosome"/>
    <property type="evidence" value="ECO:0007669"/>
    <property type="project" value="UniProtKB-KW"/>
</dbReference>
<dbReference type="GO" id="GO:0019843">
    <property type="term" value="F:rRNA binding"/>
    <property type="evidence" value="ECO:0007669"/>
    <property type="project" value="UniProtKB-UniRule"/>
</dbReference>
<dbReference type="GO" id="GO:0003735">
    <property type="term" value="F:structural constituent of ribosome"/>
    <property type="evidence" value="ECO:0007669"/>
    <property type="project" value="InterPro"/>
</dbReference>
<dbReference type="GO" id="GO:0006412">
    <property type="term" value="P:translation"/>
    <property type="evidence" value="ECO:0007669"/>
    <property type="project" value="UniProtKB-UniRule"/>
</dbReference>
<dbReference type="Gene3D" id="3.40.1370.10">
    <property type="match status" value="1"/>
</dbReference>
<dbReference type="HAMAP" id="MF_01328_B">
    <property type="entry name" value="Ribosomal_uL4_B"/>
    <property type="match status" value="1"/>
</dbReference>
<dbReference type="InterPro" id="IPR002136">
    <property type="entry name" value="Ribosomal_uL4"/>
</dbReference>
<dbReference type="InterPro" id="IPR013005">
    <property type="entry name" value="Ribosomal_uL4-like"/>
</dbReference>
<dbReference type="InterPro" id="IPR023574">
    <property type="entry name" value="Ribosomal_uL4_dom_sf"/>
</dbReference>
<dbReference type="NCBIfam" id="TIGR03953">
    <property type="entry name" value="rplD_bact"/>
    <property type="match status" value="1"/>
</dbReference>
<dbReference type="PANTHER" id="PTHR10746">
    <property type="entry name" value="50S RIBOSOMAL PROTEIN L4"/>
    <property type="match status" value="1"/>
</dbReference>
<dbReference type="PANTHER" id="PTHR10746:SF6">
    <property type="entry name" value="LARGE RIBOSOMAL SUBUNIT PROTEIN UL4M"/>
    <property type="match status" value="1"/>
</dbReference>
<dbReference type="Pfam" id="PF00573">
    <property type="entry name" value="Ribosomal_L4"/>
    <property type="match status" value="1"/>
</dbReference>
<dbReference type="SUPFAM" id="SSF52166">
    <property type="entry name" value="Ribosomal protein L4"/>
    <property type="match status" value="1"/>
</dbReference>
<protein>
    <recommendedName>
        <fullName evidence="1">Large ribosomal subunit protein uL4</fullName>
    </recommendedName>
    <alternativeName>
        <fullName evidence="3">50S ribosomal protein L4</fullName>
    </alternativeName>
</protein>
<name>RL4_BURPS</name>
<evidence type="ECO:0000255" key="1">
    <source>
        <dbReference type="HAMAP-Rule" id="MF_01328"/>
    </source>
</evidence>
<evidence type="ECO:0000256" key="2">
    <source>
        <dbReference type="SAM" id="MobiDB-lite"/>
    </source>
</evidence>
<evidence type="ECO:0000305" key="3"/>
<feature type="chain" id="PRO_0000242352" description="Large ribosomal subunit protein uL4">
    <location>
        <begin position="1"/>
        <end position="206"/>
    </location>
</feature>
<feature type="region of interest" description="Disordered" evidence="2">
    <location>
        <begin position="45"/>
        <end position="85"/>
    </location>
</feature>
<feature type="compositionally biased region" description="Basic residues" evidence="2">
    <location>
        <begin position="58"/>
        <end position="70"/>
    </location>
</feature>
<gene>
    <name evidence="1" type="primary">rplD</name>
    <name type="ordered locus">BPSL3212</name>
</gene>